<accession>A6NC97</accession>
<proteinExistence type="uncertain"/>
<feature type="chain" id="PRO_0000336085" description="Putative protein ARB2BP">
    <location>
        <begin position="1"/>
        <end position="362"/>
    </location>
</feature>
<feature type="transmembrane region" description="Helical" evidence="1">
    <location>
        <begin position="229"/>
        <end position="245"/>
    </location>
</feature>
<organism>
    <name type="scientific">Homo sapiens</name>
    <name type="common">Human</name>
    <dbReference type="NCBI Taxonomy" id="9606"/>
    <lineage>
        <taxon>Eukaryota</taxon>
        <taxon>Metazoa</taxon>
        <taxon>Chordata</taxon>
        <taxon>Craniata</taxon>
        <taxon>Vertebrata</taxon>
        <taxon>Euteleostomi</taxon>
        <taxon>Mammalia</taxon>
        <taxon>Eutheria</taxon>
        <taxon>Euarchontoglires</taxon>
        <taxon>Primates</taxon>
        <taxon>Haplorrhini</taxon>
        <taxon>Catarrhini</taxon>
        <taxon>Hominidae</taxon>
        <taxon>Homo</taxon>
    </lineage>
</organism>
<evidence type="ECO:0000255" key="1"/>
<evidence type="ECO:0000305" key="2"/>
<evidence type="ECO:0000312" key="3">
    <source>
        <dbReference type="HGNC" id="HGNC:34336"/>
    </source>
</evidence>
<protein>
    <recommendedName>
        <fullName evidence="2">Putative protein ARB2BP</fullName>
    </recommendedName>
    <alternativeName>
        <fullName>Protein FAM172BP</fullName>
    </alternativeName>
</protein>
<gene>
    <name evidence="3" type="primary">ARB2BP</name>
    <name type="synonym">FAM172B</name>
    <name type="synonym">FAM172BP</name>
</gene>
<name>ARB2P_HUMAN</name>
<comment type="subcellular location">
    <subcellularLocation>
        <location evidence="2">Membrane</location>
        <topology evidence="2">Single-pass membrane protein</topology>
    </subcellularLocation>
</comment>
<comment type="similarity">
    <text evidence="2">Belongs to the ARB2 family.</text>
</comment>
<comment type="caution">
    <text evidence="2">Could be the product of a pseudogene.</text>
</comment>
<sequence>MTQELSFQKFIEQSDLLGELKYDFNEKDEFRHTETQRPFVFNYYENVLEKNSKRYQALGHLLEQYIYELLEKVCKLEKVYIPPEADKEEPRSFFFMSEKALTNHHSALLILLQDHGVFRAGQWSQQAIIHHGLQHGSQIPCIQMALQAHYDVIVLNPNDNFVEPKVEKEWKGLLTQNIESSSLKMVQGGSFFSLQHPPKCIPKRCSNTPEEHTAYIWDYFISKTEGKDIAFIVHGYGGLVFMDLLVRRRWEVMSKVYAVALIDSEHHVGHQLGSDVQLLAWIKHHCREWVTSPKPLDKPAATVFKKEFPMVSAGTEKYILAPSSSLQSIFKYFKKALKARTTINFSRMPIVTRSSTKRKQSA</sequence>
<keyword id="KW-0472">Membrane</keyword>
<keyword id="KW-1185">Reference proteome</keyword>
<keyword id="KW-0812">Transmembrane</keyword>
<keyword id="KW-1133">Transmembrane helix</keyword>
<dbReference type="EMBL" id="AK127584">
    <property type="status" value="NOT_ANNOTATED_CDS"/>
    <property type="molecule type" value="mRNA"/>
</dbReference>
<dbReference type="EMBL" id="AC073861">
    <property type="status" value="NOT_ANNOTATED_CDS"/>
    <property type="molecule type" value="Genomic_DNA"/>
</dbReference>
<dbReference type="FunCoup" id="A6NC97">
    <property type="interactions" value="270"/>
</dbReference>
<dbReference type="GlyGen" id="A6NC97">
    <property type="glycosylation" value="1 site, 1 O-linked glycan (1 site)"/>
</dbReference>
<dbReference type="iPTMnet" id="A6NC97"/>
<dbReference type="PhosphoSitePlus" id="A6NC97"/>
<dbReference type="BioMuta" id="HGNC:34336"/>
<dbReference type="jPOST" id="A6NC97"/>
<dbReference type="MassIVE" id="A6NC97"/>
<dbReference type="ProteomicsDB" id="810"/>
<dbReference type="AGR" id="HGNC:34336"/>
<dbReference type="GeneCards" id="ARB2BP"/>
<dbReference type="HGNC" id="HGNC:34336">
    <property type="gene designation" value="ARB2BP"/>
</dbReference>
<dbReference type="neXtProt" id="NX_A6NC97"/>
<dbReference type="InParanoid" id="A6NC97"/>
<dbReference type="PAN-GO" id="A6NC97">
    <property type="GO annotations" value="3 GO annotations based on evolutionary models"/>
</dbReference>
<dbReference type="PhylomeDB" id="A6NC97"/>
<dbReference type="Pharos" id="A6NC97">
    <property type="development level" value="Tdark"/>
</dbReference>
<dbReference type="Proteomes" id="UP000005640">
    <property type="component" value="Unplaced"/>
</dbReference>
<dbReference type="RNAct" id="A6NC97">
    <property type="molecule type" value="protein"/>
</dbReference>
<dbReference type="GO" id="GO:0016020">
    <property type="term" value="C:membrane"/>
    <property type="evidence" value="ECO:0007669"/>
    <property type="project" value="UniProtKB-SubCell"/>
</dbReference>
<dbReference type="GO" id="GO:0005634">
    <property type="term" value="C:nucleus"/>
    <property type="evidence" value="ECO:0000318"/>
    <property type="project" value="GO_Central"/>
</dbReference>
<dbReference type="GO" id="GO:0031048">
    <property type="term" value="P:regulatory ncRNA-mediated heterochromatin formation"/>
    <property type="evidence" value="ECO:0000318"/>
    <property type="project" value="GO_Central"/>
</dbReference>
<dbReference type="InterPro" id="IPR048263">
    <property type="entry name" value="Arb2"/>
</dbReference>
<dbReference type="InterPro" id="IPR053858">
    <property type="entry name" value="Arb2_dom"/>
</dbReference>
<dbReference type="PANTHER" id="PTHR21357">
    <property type="entry name" value="FAM172 FAMILY PROTEIN HOMOLOG CG10038"/>
    <property type="match status" value="1"/>
</dbReference>
<dbReference type="PANTHER" id="PTHR21357:SF2">
    <property type="entry name" value="PROTEIN FAM172B-RELATED"/>
    <property type="match status" value="1"/>
</dbReference>
<dbReference type="Pfam" id="PF22749">
    <property type="entry name" value="Arb2"/>
    <property type="match status" value="1"/>
</dbReference>
<reference key="1">
    <citation type="journal article" date="2004" name="Nat. Genet.">
        <title>Complete sequencing and characterization of 21,243 full-length human cDNAs.</title>
        <authorList>
            <person name="Ota T."/>
            <person name="Suzuki Y."/>
            <person name="Nishikawa T."/>
            <person name="Otsuki T."/>
            <person name="Sugiyama T."/>
            <person name="Irie R."/>
            <person name="Wakamatsu A."/>
            <person name="Hayashi K."/>
            <person name="Sato H."/>
            <person name="Nagai K."/>
            <person name="Kimura K."/>
            <person name="Makita H."/>
            <person name="Sekine M."/>
            <person name="Obayashi M."/>
            <person name="Nishi T."/>
            <person name="Shibahara T."/>
            <person name="Tanaka T."/>
            <person name="Ishii S."/>
            <person name="Yamamoto J."/>
            <person name="Saito K."/>
            <person name="Kawai Y."/>
            <person name="Isono Y."/>
            <person name="Nakamura Y."/>
            <person name="Nagahari K."/>
            <person name="Murakami K."/>
            <person name="Yasuda T."/>
            <person name="Iwayanagi T."/>
            <person name="Wagatsuma M."/>
            <person name="Shiratori A."/>
            <person name="Sudo H."/>
            <person name="Hosoiri T."/>
            <person name="Kaku Y."/>
            <person name="Kodaira H."/>
            <person name="Kondo H."/>
            <person name="Sugawara M."/>
            <person name="Takahashi M."/>
            <person name="Kanda K."/>
            <person name="Yokoi T."/>
            <person name="Furuya T."/>
            <person name="Kikkawa E."/>
            <person name="Omura Y."/>
            <person name="Abe K."/>
            <person name="Kamihara K."/>
            <person name="Katsuta N."/>
            <person name="Sato K."/>
            <person name="Tanikawa M."/>
            <person name="Yamazaki M."/>
            <person name="Ninomiya K."/>
            <person name="Ishibashi T."/>
            <person name="Yamashita H."/>
            <person name="Murakawa K."/>
            <person name="Fujimori K."/>
            <person name="Tanai H."/>
            <person name="Kimata M."/>
            <person name="Watanabe M."/>
            <person name="Hiraoka S."/>
            <person name="Chiba Y."/>
            <person name="Ishida S."/>
            <person name="Ono Y."/>
            <person name="Takiguchi S."/>
            <person name="Watanabe S."/>
            <person name="Yosida M."/>
            <person name="Hotuta T."/>
            <person name="Kusano J."/>
            <person name="Kanehori K."/>
            <person name="Takahashi-Fujii A."/>
            <person name="Hara H."/>
            <person name="Tanase T.-O."/>
            <person name="Nomura Y."/>
            <person name="Togiya S."/>
            <person name="Komai F."/>
            <person name="Hara R."/>
            <person name="Takeuchi K."/>
            <person name="Arita M."/>
            <person name="Imose N."/>
            <person name="Musashino K."/>
            <person name="Yuuki H."/>
            <person name="Oshima A."/>
            <person name="Sasaki N."/>
            <person name="Aotsuka S."/>
            <person name="Yoshikawa Y."/>
            <person name="Matsunawa H."/>
            <person name="Ichihara T."/>
            <person name="Shiohata N."/>
            <person name="Sano S."/>
            <person name="Moriya S."/>
            <person name="Momiyama H."/>
            <person name="Satoh N."/>
            <person name="Takami S."/>
            <person name="Terashima Y."/>
            <person name="Suzuki O."/>
            <person name="Nakagawa S."/>
            <person name="Senoh A."/>
            <person name="Mizoguchi H."/>
            <person name="Goto Y."/>
            <person name="Shimizu F."/>
            <person name="Wakebe H."/>
            <person name="Hishigaki H."/>
            <person name="Watanabe T."/>
            <person name="Sugiyama A."/>
            <person name="Takemoto M."/>
            <person name="Kawakami B."/>
            <person name="Yamazaki M."/>
            <person name="Watanabe K."/>
            <person name="Kumagai A."/>
            <person name="Itakura S."/>
            <person name="Fukuzumi Y."/>
            <person name="Fujimori Y."/>
            <person name="Komiyama M."/>
            <person name="Tashiro H."/>
            <person name="Tanigami A."/>
            <person name="Fujiwara T."/>
            <person name="Ono T."/>
            <person name="Yamada K."/>
            <person name="Fujii Y."/>
            <person name="Ozaki K."/>
            <person name="Hirao M."/>
            <person name="Ohmori Y."/>
            <person name="Kawabata A."/>
            <person name="Hikiji T."/>
            <person name="Kobatake N."/>
            <person name="Inagaki H."/>
            <person name="Ikema Y."/>
            <person name="Okamoto S."/>
            <person name="Okitani R."/>
            <person name="Kawakami T."/>
            <person name="Noguchi S."/>
            <person name="Itoh T."/>
            <person name="Shigeta K."/>
            <person name="Senba T."/>
            <person name="Matsumura K."/>
            <person name="Nakajima Y."/>
            <person name="Mizuno T."/>
            <person name="Morinaga M."/>
            <person name="Sasaki M."/>
            <person name="Togashi T."/>
            <person name="Oyama M."/>
            <person name="Hata H."/>
            <person name="Watanabe M."/>
            <person name="Komatsu T."/>
            <person name="Mizushima-Sugano J."/>
            <person name="Satoh T."/>
            <person name="Shirai Y."/>
            <person name="Takahashi Y."/>
            <person name="Nakagawa K."/>
            <person name="Okumura K."/>
            <person name="Nagase T."/>
            <person name="Nomura N."/>
            <person name="Kikuchi H."/>
            <person name="Masuho Y."/>
            <person name="Yamashita R."/>
            <person name="Nakai K."/>
            <person name="Yada T."/>
            <person name="Nakamura Y."/>
            <person name="Ohara O."/>
            <person name="Isogai T."/>
            <person name="Sugano S."/>
        </authorList>
    </citation>
    <scope>NUCLEOTIDE SEQUENCE [LARGE SCALE MRNA]</scope>
</reference>
<reference key="2">
    <citation type="journal article" date="2006" name="Nature">
        <title>The DNA sequence, annotation and analysis of human chromosome 3.</title>
        <authorList>
            <person name="Muzny D.M."/>
            <person name="Scherer S.E."/>
            <person name="Kaul R."/>
            <person name="Wang J."/>
            <person name="Yu J."/>
            <person name="Sudbrak R."/>
            <person name="Buhay C.J."/>
            <person name="Chen R."/>
            <person name="Cree A."/>
            <person name="Ding Y."/>
            <person name="Dugan-Rocha S."/>
            <person name="Gill R."/>
            <person name="Gunaratne P."/>
            <person name="Harris R.A."/>
            <person name="Hawes A.C."/>
            <person name="Hernandez J."/>
            <person name="Hodgson A.V."/>
            <person name="Hume J."/>
            <person name="Jackson A."/>
            <person name="Khan Z.M."/>
            <person name="Kovar-Smith C."/>
            <person name="Lewis L.R."/>
            <person name="Lozado R.J."/>
            <person name="Metzker M.L."/>
            <person name="Milosavljevic A."/>
            <person name="Miner G.R."/>
            <person name="Morgan M.B."/>
            <person name="Nazareth L.V."/>
            <person name="Scott G."/>
            <person name="Sodergren E."/>
            <person name="Song X.-Z."/>
            <person name="Steffen D."/>
            <person name="Wei S."/>
            <person name="Wheeler D.A."/>
            <person name="Wright M.W."/>
            <person name="Worley K.C."/>
            <person name="Yuan Y."/>
            <person name="Zhang Z."/>
            <person name="Adams C.Q."/>
            <person name="Ansari-Lari M.A."/>
            <person name="Ayele M."/>
            <person name="Brown M.J."/>
            <person name="Chen G."/>
            <person name="Chen Z."/>
            <person name="Clendenning J."/>
            <person name="Clerc-Blankenburg K.P."/>
            <person name="Chen R."/>
            <person name="Chen Z."/>
            <person name="Davis C."/>
            <person name="Delgado O."/>
            <person name="Dinh H.H."/>
            <person name="Dong W."/>
            <person name="Draper H."/>
            <person name="Ernst S."/>
            <person name="Fu G."/>
            <person name="Gonzalez-Garay M.L."/>
            <person name="Garcia D.K."/>
            <person name="Gillett W."/>
            <person name="Gu J."/>
            <person name="Hao B."/>
            <person name="Haugen E."/>
            <person name="Havlak P."/>
            <person name="He X."/>
            <person name="Hennig S."/>
            <person name="Hu S."/>
            <person name="Huang W."/>
            <person name="Jackson L.R."/>
            <person name="Jacob L.S."/>
            <person name="Kelly S.H."/>
            <person name="Kube M."/>
            <person name="Levy R."/>
            <person name="Li Z."/>
            <person name="Liu B."/>
            <person name="Liu J."/>
            <person name="Liu W."/>
            <person name="Lu J."/>
            <person name="Maheshwari M."/>
            <person name="Nguyen B.-V."/>
            <person name="Okwuonu G.O."/>
            <person name="Palmeiri A."/>
            <person name="Pasternak S."/>
            <person name="Perez L.M."/>
            <person name="Phelps K.A."/>
            <person name="Plopper F.J."/>
            <person name="Qiang B."/>
            <person name="Raymond C."/>
            <person name="Rodriguez R."/>
            <person name="Saenphimmachak C."/>
            <person name="Santibanez J."/>
            <person name="Shen H."/>
            <person name="Shen Y."/>
            <person name="Subramanian S."/>
            <person name="Tabor P.E."/>
            <person name="Verduzco D."/>
            <person name="Waldron L."/>
            <person name="Wang J."/>
            <person name="Wang J."/>
            <person name="Wang Q."/>
            <person name="Williams G.A."/>
            <person name="Wong G.K.-S."/>
            <person name="Yao Z."/>
            <person name="Zhang J."/>
            <person name="Zhang X."/>
            <person name="Zhao G."/>
            <person name="Zhou J."/>
            <person name="Zhou Y."/>
            <person name="Nelson D."/>
            <person name="Lehrach H."/>
            <person name="Reinhardt R."/>
            <person name="Naylor S.L."/>
            <person name="Yang H."/>
            <person name="Olson M."/>
            <person name="Weinstock G."/>
            <person name="Gibbs R.A."/>
        </authorList>
    </citation>
    <scope>NUCLEOTIDE SEQUENCE [LARGE SCALE GENOMIC DNA]</scope>
</reference>